<organism>
    <name type="scientific">Homo sapiens</name>
    <name type="common">Human</name>
    <dbReference type="NCBI Taxonomy" id="9606"/>
    <lineage>
        <taxon>Eukaryota</taxon>
        <taxon>Metazoa</taxon>
        <taxon>Chordata</taxon>
        <taxon>Craniata</taxon>
        <taxon>Vertebrata</taxon>
        <taxon>Euteleostomi</taxon>
        <taxon>Mammalia</taxon>
        <taxon>Eutheria</taxon>
        <taxon>Euarchontoglires</taxon>
        <taxon>Primates</taxon>
        <taxon>Haplorrhini</taxon>
        <taxon>Catarrhini</taxon>
        <taxon>Hominidae</taxon>
        <taxon>Homo</taxon>
    </lineage>
</organism>
<evidence type="ECO:0000255" key="1">
    <source>
        <dbReference type="PROSITE-ProRule" id="PRU00086"/>
    </source>
</evidence>
<evidence type="ECO:0000255" key="2">
    <source>
        <dbReference type="PROSITE-ProRule" id="PRU00146"/>
    </source>
</evidence>
<evidence type="ECO:0000256" key="3">
    <source>
        <dbReference type="SAM" id="MobiDB-lite"/>
    </source>
</evidence>
<evidence type="ECO:0000269" key="4">
    <source>
    </source>
</evidence>
<evidence type="ECO:0000269" key="5">
    <source>
    </source>
</evidence>
<evidence type="ECO:0000269" key="6">
    <source>
    </source>
</evidence>
<evidence type="ECO:0000269" key="7">
    <source>
    </source>
</evidence>
<evidence type="ECO:0000269" key="8">
    <source>
    </source>
</evidence>
<evidence type="ECO:0000269" key="9">
    <source>
    </source>
</evidence>
<evidence type="ECO:0000269" key="10">
    <source ref="3"/>
</evidence>
<evidence type="ECO:0000269" key="11">
    <source ref="4"/>
</evidence>
<evidence type="ECO:0000269" key="12">
    <source ref="6"/>
</evidence>
<evidence type="ECO:0000305" key="13"/>
<evidence type="ECO:0007744" key="14">
    <source>
    </source>
</evidence>
<dbReference type="EMBL" id="S53374">
    <property type="protein sequence ID" value="AAB19475.2"/>
    <property type="status" value="ALT_FRAME"/>
    <property type="molecule type" value="mRNA"/>
</dbReference>
<dbReference type="EMBL" id="AB029516">
    <property type="protein sequence ID" value="BAA82324.1"/>
    <property type="molecule type" value="Genomic_DNA"/>
</dbReference>
<dbReference type="EMBL" id="AB029517">
    <property type="protein sequence ID" value="BAA82325.1"/>
    <property type="molecule type" value="Genomic_DNA"/>
</dbReference>
<dbReference type="EMBL" id="AB029518">
    <property type="protein sequence ID" value="BAA82326.1"/>
    <property type="molecule type" value="Genomic_DNA"/>
</dbReference>
<dbReference type="EMBL" id="AB029519">
    <property type="protein sequence ID" value="BAA82327.1"/>
    <property type="molecule type" value="Genomic_DNA"/>
</dbReference>
<dbReference type="EMBL" id="U25826">
    <property type="protein sequence ID" value="AAB60363.1"/>
    <property type="status" value="ALT_FRAME"/>
    <property type="molecule type" value="Genomic_DNA"/>
</dbReference>
<dbReference type="EMBL" id="BA000025">
    <property type="protein sequence ID" value="BAB63312.1"/>
    <property type="molecule type" value="Genomic_DNA"/>
</dbReference>
<dbReference type="EMBL" id="AB088113">
    <property type="protein sequence ID" value="BAC54945.1"/>
    <property type="molecule type" value="Genomic_DNA"/>
</dbReference>
<dbReference type="EMBL" id="AB103619">
    <property type="protein sequence ID" value="BAF31280.1"/>
    <property type="molecule type" value="Genomic_DNA"/>
</dbReference>
<dbReference type="EMBL" id="AB202105">
    <property type="protein sequence ID" value="BAE78629.1"/>
    <property type="molecule type" value="Genomic_DNA"/>
</dbReference>
<dbReference type="EMBL" id="BT007247">
    <property type="protein sequence ID" value="AAP35911.1"/>
    <property type="molecule type" value="mRNA"/>
</dbReference>
<dbReference type="EMBL" id="AL662833">
    <property type="status" value="NOT_ANNOTATED_CDS"/>
    <property type="molecule type" value="Genomic_DNA"/>
</dbReference>
<dbReference type="EMBL" id="AL662844">
    <property type="status" value="NOT_ANNOTATED_CDS"/>
    <property type="molecule type" value="Genomic_DNA"/>
</dbReference>
<dbReference type="EMBL" id="AL773544">
    <property type="status" value="NOT_ANNOTATED_CDS"/>
    <property type="molecule type" value="Genomic_DNA"/>
</dbReference>
<dbReference type="EMBL" id="BX088580">
    <property type="status" value="NOT_ANNOTATED_CDS"/>
    <property type="molecule type" value="Genomic_DNA"/>
</dbReference>
<dbReference type="EMBL" id="CR759815">
    <property type="status" value="NOT_ANNOTATED_CDS"/>
    <property type="molecule type" value="Genomic_DNA"/>
</dbReference>
<dbReference type="EMBL" id="CR388229">
    <property type="status" value="NOT_ANNOTATED_CDS"/>
    <property type="molecule type" value="Genomic_DNA"/>
</dbReference>
<dbReference type="EMBL" id="CR753819">
    <property type="status" value="NOT_ANNOTATED_CDS"/>
    <property type="molecule type" value="Genomic_DNA"/>
</dbReference>
<dbReference type="EMBL" id="CR847794">
    <property type="status" value="NOT_ANNOTATED_CDS"/>
    <property type="molecule type" value="Genomic_DNA"/>
</dbReference>
<dbReference type="EMBL" id="CH471081">
    <property type="protein sequence ID" value="EAX03363.1"/>
    <property type="molecule type" value="Genomic_DNA"/>
</dbReference>
<dbReference type="EMBL" id="BC002493">
    <property type="protein sequence ID" value="AAH02493.1"/>
    <property type="molecule type" value="mRNA"/>
</dbReference>
<dbReference type="EMBL" id="BC033086">
    <property type="protein sequence ID" value="AAH33086.1"/>
    <property type="molecule type" value="mRNA"/>
</dbReference>
<dbReference type="EMBL" id="BC044632">
    <property type="protein sequence ID" value="AAH44632.1"/>
    <property type="molecule type" value="mRNA"/>
</dbReference>
<dbReference type="CCDS" id="CCDS43446.1"/>
<dbReference type="PIR" id="A61188">
    <property type="entry name" value="A61188"/>
</dbReference>
<dbReference type="RefSeq" id="NP_001070979.1">
    <property type="nucleotide sequence ID" value="NM_001077511.2"/>
</dbReference>
<dbReference type="RefSeq" id="NP_001305837.1">
    <property type="nucleotide sequence ID" value="NM_001318908.2"/>
</dbReference>
<dbReference type="RefSeq" id="NP_009040.2">
    <property type="nucleotide sequence ID" value="NM_007109.3"/>
</dbReference>
<dbReference type="RefSeq" id="XP_047275229.1">
    <property type="nucleotide sequence ID" value="XM_047419273.1"/>
</dbReference>
<dbReference type="RefSeq" id="XP_047275230.1">
    <property type="nucleotide sequence ID" value="XM_047419274.1"/>
</dbReference>
<dbReference type="SMR" id="Q9Y242"/>
<dbReference type="BioGRID" id="112801">
    <property type="interactions" value="30"/>
</dbReference>
<dbReference type="FunCoup" id="Q9Y242">
    <property type="interactions" value="954"/>
</dbReference>
<dbReference type="IntAct" id="Q9Y242">
    <property type="interactions" value="25"/>
</dbReference>
<dbReference type="MINT" id="Q9Y242"/>
<dbReference type="STRING" id="9606.ENSP00000365433"/>
<dbReference type="iPTMnet" id="Q9Y242"/>
<dbReference type="PhosphoSitePlus" id="Q9Y242"/>
<dbReference type="BioMuta" id="TCF19"/>
<dbReference type="DMDM" id="126302606"/>
<dbReference type="jPOST" id="Q9Y242"/>
<dbReference type="MassIVE" id="Q9Y242"/>
<dbReference type="PaxDb" id="9606-ENSP00000365433"/>
<dbReference type="PeptideAtlas" id="Q9Y242"/>
<dbReference type="ProteomicsDB" id="85640"/>
<dbReference type="Pumba" id="Q9Y242"/>
<dbReference type="Antibodypedia" id="26851">
    <property type="antibodies" value="229 antibodies from 35 providers"/>
</dbReference>
<dbReference type="DNASU" id="6941"/>
<dbReference type="Ensembl" id="ENST00000376255.4">
    <property type="protein sequence ID" value="ENSP00000365431.4"/>
    <property type="gene ID" value="ENSG00000137310.13"/>
</dbReference>
<dbReference type="Ensembl" id="ENST00000376257.8">
    <property type="protein sequence ID" value="ENSP00000365433.3"/>
    <property type="gene ID" value="ENSG00000137310.13"/>
</dbReference>
<dbReference type="Ensembl" id="ENST00000706778.1">
    <property type="protein sequence ID" value="ENSP00000516543.1"/>
    <property type="gene ID" value="ENSG00000137310.13"/>
</dbReference>
<dbReference type="Ensembl" id="ENST00000706779.1">
    <property type="protein sequence ID" value="ENSP00000516544.1"/>
    <property type="gene ID" value="ENSG00000137310.13"/>
</dbReference>
<dbReference type="Ensembl" id="ENST00000706780.1">
    <property type="protein sequence ID" value="ENSP00000516545.1"/>
    <property type="gene ID" value="ENSG00000137310.13"/>
</dbReference>
<dbReference type="Ensembl" id="ENST00000706781.1">
    <property type="protein sequence ID" value="ENSP00000516546.1"/>
    <property type="gene ID" value="ENSG00000137310.13"/>
</dbReference>
<dbReference type="Ensembl" id="ENST00000706787.1">
    <property type="protein sequence ID" value="ENSP00000516551.1"/>
    <property type="gene ID" value="ENSG00000137310.13"/>
</dbReference>
<dbReference type="GeneID" id="6941"/>
<dbReference type="KEGG" id="hsa:6941"/>
<dbReference type="MANE-Select" id="ENST00000376257.8">
    <property type="protein sequence ID" value="ENSP00000365433.3"/>
    <property type="RefSeq nucleotide sequence ID" value="NM_007109.3"/>
    <property type="RefSeq protein sequence ID" value="NP_009040.2"/>
</dbReference>
<dbReference type="UCSC" id="uc003nss.4">
    <property type="organism name" value="human"/>
</dbReference>
<dbReference type="AGR" id="HGNC:11629"/>
<dbReference type="CTD" id="6941"/>
<dbReference type="DisGeNET" id="6941"/>
<dbReference type="GeneCards" id="TCF19"/>
<dbReference type="HGNC" id="HGNC:11629">
    <property type="gene designation" value="TCF19"/>
</dbReference>
<dbReference type="HPA" id="ENSG00000137310">
    <property type="expression patterns" value="Low tissue specificity"/>
</dbReference>
<dbReference type="MIM" id="600912">
    <property type="type" value="gene"/>
</dbReference>
<dbReference type="neXtProt" id="NX_Q9Y242"/>
<dbReference type="OpenTargets" id="ENSG00000137310"/>
<dbReference type="PharmGKB" id="PA36384"/>
<dbReference type="VEuPathDB" id="HostDB:ENSG00000137310"/>
<dbReference type="eggNOG" id="ENOG502RHCY">
    <property type="taxonomic scope" value="Eukaryota"/>
</dbReference>
<dbReference type="GeneTree" id="ENSGT00390000015391"/>
<dbReference type="HOGENOM" id="CLU_041089_0_0_1"/>
<dbReference type="InParanoid" id="Q9Y242"/>
<dbReference type="OMA" id="IWFHVAC"/>
<dbReference type="OrthoDB" id="436852at2759"/>
<dbReference type="PAN-GO" id="Q9Y242">
    <property type="GO annotations" value="2 GO annotations based on evolutionary models"/>
</dbReference>
<dbReference type="PhylomeDB" id="Q9Y242"/>
<dbReference type="TreeFam" id="TF334697"/>
<dbReference type="PathwayCommons" id="Q9Y242"/>
<dbReference type="SignaLink" id="Q9Y242"/>
<dbReference type="BioGRID-ORCS" id="6941">
    <property type="hits" value="13 hits in 1161 CRISPR screens"/>
</dbReference>
<dbReference type="ChiTaRS" id="TCF19">
    <property type="organism name" value="human"/>
</dbReference>
<dbReference type="GeneWiki" id="TCF19"/>
<dbReference type="GenomeRNAi" id="6941"/>
<dbReference type="Pharos" id="Q9Y242">
    <property type="development level" value="Tbio"/>
</dbReference>
<dbReference type="PRO" id="PR:Q9Y242"/>
<dbReference type="Proteomes" id="UP000005640">
    <property type="component" value="Chromosome 6"/>
</dbReference>
<dbReference type="RNAct" id="Q9Y242">
    <property type="molecule type" value="protein"/>
</dbReference>
<dbReference type="Bgee" id="ENSG00000137310">
    <property type="expression patterns" value="Expressed in primordial germ cell in gonad and 100 other cell types or tissues"/>
</dbReference>
<dbReference type="ExpressionAtlas" id="Q9Y242">
    <property type="expression patterns" value="baseline and differential"/>
</dbReference>
<dbReference type="GO" id="GO:0005634">
    <property type="term" value="C:nucleus"/>
    <property type="evidence" value="ECO:0000318"/>
    <property type="project" value="GO_Central"/>
</dbReference>
<dbReference type="GO" id="GO:0008270">
    <property type="term" value="F:zinc ion binding"/>
    <property type="evidence" value="ECO:0007669"/>
    <property type="project" value="UniProtKB-KW"/>
</dbReference>
<dbReference type="GO" id="GO:0010468">
    <property type="term" value="P:regulation of gene expression"/>
    <property type="evidence" value="ECO:0000318"/>
    <property type="project" value="GO_Central"/>
</dbReference>
<dbReference type="CDD" id="cd22685">
    <property type="entry name" value="FHA_TCF19"/>
    <property type="match status" value="1"/>
</dbReference>
<dbReference type="CDD" id="cd15609">
    <property type="entry name" value="PHD_TCF19"/>
    <property type="match status" value="1"/>
</dbReference>
<dbReference type="Gene3D" id="2.60.200.20">
    <property type="match status" value="1"/>
</dbReference>
<dbReference type="Gene3D" id="3.30.40.10">
    <property type="entry name" value="Zinc/RING finger domain, C3HC4 (zinc finger)"/>
    <property type="match status" value="1"/>
</dbReference>
<dbReference type="InterPro" id="IPR000253">
    <property type="entry name" value="FHA_dom"/>
</dbReference>
<dbReference type="InterPro" id="IPR008984">
    <property type="entry name" value="SMAD_FHA_dom_sf"/>
</dbReference>
<dbReference type="InterPro" id="IPR042803">
    <property type="entry name" value="TCF19"/>
</dbReference>
<dbReference type="InterPro" id="IPR039095">
    <property type="entry name" value="TCF19_PHD"/>
</dbReference>
<dbReference type="InterPro" id="IPR019786">
    <property type="entry name" value="Zinc_finger_PHD-type_CS"/>
</dbReference>
<dbReference type="InterPro" id="IPR011011">
    <property type="entry name" value="Znf_FYVE_PHD"/>
</dbReference>
<dbReference type="InterPro" id="IPR001965">
    <property type="entry name" value="Znf_PHD"/>
</dbReference>
<dbReference type="InterPro" id="IPR019787">
    <property type="entry name" value="Znf_PHD-finger"/>
</dbReference>
<dbReference type="InterPro" id="IPR013083">
    <property type="entry name" value="Znf_RING/FYVE/PHD"/>
</dbReference>
<dbReference type="PANTHER" id="PTHR15464">
    <property type="entry name" value="TRANSCRIPTION FACTOR 19"/>
    <property type="match status" value="1"/>
</dbReference>
<dbReference type="PANTHER" id="PTHR15464:SF1">
    <property type="entry name" value="TRANSCRIPTION FACTOR 19"/>
    <property type="match status" value="1"/>
</dbReference>
<dbReference type="Pfam" id="PF00498">
    <property type="entry name" value="FHA"/>
    <property type="match status" value="1"/>
</dbReference>
<dbReference type="Pfam" id="PF00628">
    <property type="entry name" value="PHD"/>
    <property type="match status" value="1"/>
</dbReference>
<dbReference type="SMART" id="SM00240">
    <property type="entry name" value="FHA"/>
    <property type="match status" value="1"/>
</dbReference>
<dbReference type="SMART" id="SM00249">
    <property type="entry name" value="PHD"/>
    <property type="match status" value="1"/>
</dbReference>
<dbReference type="SUPFAM" id="SSF57903">
    <property type="entry name" value="FYVE/PHD zinc finger"/>
    <property type="match status" value="1"/>
</dbReference>
<dbReference type="SUPFAM" id="SSF49879">
    <property type="entry name" value="SMAD/FHA domain"/>
    <property type="match status" value="1"/>
</dbReference>
<dbReference type="PROSITE" id="PS50006">
    <property type="entry name" value="FHA_DOMAIN"/>
    <property type="match status" value="1"/>
</dbReference>
<dbReference type="PROSITE" id="PS01359">
    <property type="entry name" value="ZF_PHD_1"/>
    <property type="match status" value="1"/>
</dbReference>
<gene>
    <name type="primary">TCF19</name>
    <name type="synonym">SC1</name>
</gene>
<keyword id="KW-0479">Metal-binding</keyword>
<keyword id="KW-0539">Nucleus</keyword>
<keyword id="KW-0597">Phosphoprotein</keyword>
<keyword id="KW-1267">Proteomics identification</keyword>
<keyword id="KW-1185">Reference proteome</keyword>
<keyword id="KW-0804">Transcription</keyword>
<keyword id="KW-0805">Transcription regulation</keyword>
<keyword id="KW-0862">Zinc</keyword>
<keyword id="KW-0863">Zinc-finger</keyword>
<feature type="chain" id="PRO_0000059327" description="Transcription factor 19">
    <location>
        <begin position="1"/>
        <end position="345"/>
    </location>
</feature>
<feature type="domain" description="FHA" evidence="1">
    <location>
        <begin position="31"/>
        <end position="88"/>
    </location>
</feature>
<feature type="zinc finger region" description="PHD-type" evidence="2">
    <location>
        <begin position="293"/>
        <end position="342"/>
    </location>
</feature>
<feature type="region of interest" description="Disordered" evidence="3">
    <location>
        <begin position="190"/>
        <end position="227"/>
    </location>
</feature>
<feature type="binding site" evidence="2">
    <location>
        <position position="296"/>
    </location>
    <ligand>
        <name>Zn(2+)</name>
        <dbReference type="ChEBI" id="CHEBI:29105"/>
        <label>1</label>
    </ligand>
</feature>
<feature type="binding site" evidence="2">
    <location>
        <position position="298"/>
    </location>
    <ligand>
        <name>Zn(2+)</name>
        <dbReference type="ChEBI" id="CHEBI:29105"/>
        <label>1</label>
    </ligand>
</feature>
<feature type="binding site" evidence="2">
    <location>
        <position position="310"/>
    </location>
    <ligand>
        <name>Zn(2+)</name>
        <dbReference type="ChEBI" id="CHEBI:29105"/>
        <label>2</label>
    </ligand>
</feature>
<feature type="binding site" evidence="2">
    <location>
        <position position="313"/>
    </location>
    <ligand>
        <name>Zn(2+)</name>
        <dbReference type="ChEBI" id="CHEBI:29105"/>
        <label>2</label>
    </ligand>
</feature>
<feature type="binding site" evidence="2">
    <location>
        <position position="318"/>
    </location>
    <ligand>
        <name>Zn(2+)</name>
        <dbReference type="ChEBI" id="CHEBI:29105"/>
        <label>1</label>
    </ligand>
</feature>
<feature type="binding site" evidence="2">
    <location>
        <position position="321"/>
    </location>
    <ligand>
        <name>Zn(2+)</name>
        <dbReference type="ChEBI" id="CHEBI:29105"/>
        <label>1</label>
    </ligand>
</feature>
<feature type="binding site" evidence="2">
    <location>
        <position position="336"/>
    </location>
    <ligand>
        <name>Zn(2+)</name>
        <dbReference type="ChEBI" id="CHEBI:29105"/>
        <label>2</label>
    </ligand>
</feature>
<feature type="binding site" evidence="2">
    <location>
        <position position="339"/>
    </location>
    <ligand>
        <name>Zn(2+)</name>
        <dbReference type="ChEBI" id="CHEBI:29105"/>
        <label>2</label>
    </ligand>
</feature>
<feature type="modified residue" description="Phosphoserine" evidence="14">
    <location>
        <position position="78"/>
    </location>
</feature>
<feature type="sequence variant" id="VAR_051604" description="In dbSNP:rs7750641." evidence="5">
    <original>P</original>
    <variation>S</variation>
    <location>
        <position position="109"/>
    </location>
</feature>
<feature type="sequence variant" id="VAR_017741" description="In dbSNP:rs2073721." evidence="4 5 6 7 8 10 11 12">
    <original>M</original>
    <variation>V</variation>
    <location>
        <position position="211"/>
    </location>
</feature>
<feature type="sequence variant" id="VAR_017742" description="In dbSNP:rs2073724." evidence="4 6 12">
    <original>P</original>
    <variation>L</variation>
    <location>
        <position position="241"/>
    </location>
</feature>
<feature type="sequence conflict" description="In Ref. 3; AAB60363." evidence="13" ref="3">
    <original>A</original>
    <variation>V</variation>
    <location>
        <position position="27"/>
    </location>
</feature>
<feature type="sequence conflict" description="In Ref. 1; AAB19475." evidence="13" ref="1">
    <original>Q</original>
    <variation>N</variation>
    <location>
        <position position="123"/>
    </location>
</feature>
<feature type="sequence conflict" description="In Ref. 1; AAB19475." evidence="13" ref="1">
    <original>S</original>
    <variation>T</variation>
    <location>
        <position position="193"/>
    </location>
</feature>
<feature type="sequence conflict" description="In Ref. 3; AAB60363." evidence="13" ref="3">
    <original>R</original>
    <variation>A</variation>
    <location>
        <position position="268"/>
    </location>
</feature>
<protein>
    <recommendedName>
        <fullName>Transcription factor 19</fullName>
        <shortName>TCF-19</shortName>
    </recommendedName>
    <alternativeName>
        <fullName>Transcription factor SC1</fullName>
    </alternativeName>
</protein>
<sequence length="345" mass="37184">MLPCFQLLRIGGGRGGDLYTFHPPAGAGCTYRLGHRADLCDVALRPQQEPGLISGIHAELHAEPRGDDWRVSLEDHSSQGTLVNNVRLPRGHRLELSDGDLLTFGPEGPPGTSPSEFYFMFQQVRVKPQDFAAITIPRSRGEARVGAGFRPMLPSQGAPQRPLSTFSPAPKATLILNSIGSLSKLRPQPLTFSPSWGGPKSLPVPAPPGEMGTTPSAPPQRNRRKSVHRVLAELDDESEPPENPPPVLMEPRKKLRVDKAPLTPTGNRRGRPRKYPVSAPMAPPAVGGGEPCAAPCCCLPQEETVAWVQCDGCDVWFHVACVGCSIQAAREADFRCPGCRAGIQT</sequence>
<name>TCF19_HUMAN</name>
<comment type="function">
    <text evidence="8 9">Potential transcription factor that may play a role in the regulation of genes involved in cell cycle G1/S transition (PubMed:1868030, PubMed:31141247). May bind to regulatory elements of genes, including the promoter of the transcription factor FOXO1 (PubMed:31141247).</text>
</comment>
<comment type="interaction">
    <interactant intactId="EBI-7413767">
        <id>Q9Y242</id>
    </interactant>
    <interactant intactId="EBI-2548012">
        <id>Q9H2G9</id>
        <label>BLZF1</label>
    </interactant>
    <organismsDiffer>false</organismsDiffer>
    <experiments>7</experiments>
</comment>
<comment type="interaction">
    <interactant intactId="EBI-7413767">
        <id>Q9Y242</id>
    </interactant>
    <interactant intactId="EBI-742887">
        <id>Q8TAP6</id>
        <label>CEP76</label>
    </interactant>
    <organismsDiffer>false</organismsDiffer>
    <experiments>3</experiments>
</comment>
<comment type="interaction">
    <interactant intactId="EBI-7413767">
        <id>Q9Y242</id>
    </interactant>
    <interactant intactId="EBI-742054">
        <id>Q96D03</id>
        <label>DDIT4L</label>
    </interactant>
    <organismsDiffer>false</organismsDiffer>
    <experiments>3</experiments>
</comment>
<comment type="interaction">
    <interactant intactId="EBI-7413767">
        <id>Q9Y242</id>
    </interactant>
    <interactant intactId="EBI-749694">
        <id>O75461</id>
        <label>E2F6</label>
    </interactant>
    <organismsDiffer>false</organismsDiffer>
    <experiments>3</experiments>
</comment>
<comment type="interaction">
    <interactant intactId="EBI-7413767">
        <id>Q9Y242</id>
    </interactant>
    <interactant intactId="EBI-618309">
        <id>Q08379</id>
        <label>GOLGA2</label>
    </interactant>
    <organismsDiffer>false</organismsDiffer>
    <experiments>5</experiments>
</comment>
<comment type="interaction">
    <interactant intactId="EBI-7413767">
        <id>Q9Y242</id>
    </interactant>
    <interactant intactId="EBI-740785">
        <id>P49639</id>
        <label>HOXA1</label>
    </interactant>
    <organismsDiffer>false</organismsDiffer>
    <experiments>3</experiments>
</comment>
<comment type="interaction">
    <interactant intactId="EBI-7413767">
        <id>Q9Y242</id>
    </interactant>
    <interactant intactId="EBI-7116203">
        <id>O75031</id>
        <label>HSF2BP</label>
    </interactant>
    <organismsDiffer>false</organismsDiffer>
    <experiments>3</experiments>
</comment>
<comment type="interaction">
    <interactant intactId="EBI-7413767">
        <id>Q9Y242</id>
    </interactant>
    <interactant intactId="EBI-10271199">
        <id>Q8NI38</id>
        <label>NFKBID</label>
    </interactant>
    <organismsDiffer>false</organismsDiffer>
    <experiments>3</experiments>
</comment>
<comment type="interaction">
    <interactant intactId="EBI-7413767">
        <id>Q9Y242</id>
    </interactant>
    <interactant intactId="EBI-12025760">
        <id>Q86UR1-2</id>
        <label>NOXA1</label>
    </interactant>
    <organismsDiffer>false</organismsDiffer>
    <experiments>3</experiments>
</comment>
<comment type="interaction">
    <interactant intactId="EBI-7413767">
        <id>Q9Y242</id>
    </interactant>
    <interactant intactId="EBI-350517">
        <id>Q9NR12</id>
        <label>PDLIM7</label>
    </interactant>
    <organismsDiffer>false</organismsDiffer>
    <experiments>3</experiments>
</comment>
<comment type="interaction">
    <interactant intactId="EBI-7413767">
        <id>Q9Y242</id>
    </interactant>
    <interactant intactId="EBI-357275">
        <id>Q99471</id>
        <label>PFDN5</label>
    </interactant>
    <organismsDiffer>false</organismsDiffer>
    <experiments>3</experiments>
</comment>
<comment type="interaction">
    <interactant intactId="EBI-7413767">
        <id>Q9Y242</id>
    </interactant>
    <interactant intactId="EBI-1053424">
        <id>O43741</id>
        <label>PRKAB2</label>
    </interactant>
    <organismsDiffer>false</organismsDiffer>
    <experiments>3</experiments>
</comment>
<comment type="interaction">
    <interactant intactId="EBI-7413767">
        <id>Q9Y242</id>
    </interactant>
    <interactant intactId="EBI-1244971">
        <id>Q15669</id>
        <label>RHOH</label>
    </interactant>
    <organismsDiffer>false</organismsDiffer>
    <experiments>3</experiments>
</comment>
<comment type="interaction">
    <interactant intactId="EBI-7413767">
        <id>Q9Y242</id>
    </interactant>
    <interactant intactId="EBI-492476">
        <id>Q96RU7</id>
        <label>TRIB3</label>
    </interactant>
    <organismsDiffer>false</organismsDiffer>
    <experiments>3</experiments>
</comment>
<comment type="interaction">
    <interactant intactId="EBI-7413767">
        <id>Q9Y242</id>
    </interactant>
    <interactant intactId="EBI-10183064">
        <id>Q8N5A5-2</id>
        <label>ZGPAT</label>
    </interactant>
    <organismsDiffer>false</organismsDiffer>
    <experiments>3</experiments>
</comment>
<comment type="interaction">
    <interactant intactId="EBI-7413767">
        <id>Q9Y242</id>
    </interactant>
    <interactant intactId="EBI-17269964">
        <id>Q6S9Z5</id>
        <label>ZNF474</label>
    </interactant>
    <organismsDiffer>false</organismsDiffer>
    <experiments>3</experiments>
</comment>
<comment type="subcellular location">
    <subcellularLocation>
        <location evidence="13">Nucleus</location>
    </subcellularLocation>
</comment>
<comment type="developmental stage">
    <text evidence="8">Growth regulated.</text>
</comment>
<comment type="sequence caution" evidence="13">
    <conflict type="frameshift">
        <sequence resource="EMBL-CDS" id="AAB60363"/>
    </conflict>
</comment>
<accession>Q9Y242</accession>
<accession>A6NCT8</accession>
<accession>B0UY11</accession>
<accession>Q0EFA8</accession>
<accession>Q13176</accession>
<accession>Q15967</accession>
<accession>Q5SQ89</accession>
<accession>Q5STD6</accession>
<accession>Q5STF5</accession>
<accession>Q9BUM2</accession>
<accession>Q9UBH7</accession>
<proteinExistence type="evidence at protein level"/>
<reference key="1">
    <citation type="journal article" date="1991" name="Cell Growth Differ.">
        <title>A new growth-regulated complementary DNA with the sequence of a putative trans-activating factor.</title>
        <authorList>
            <person name="Ku D.H."/>
            <person name="Chang C.D."/>
            <person name="Koniecki J."/>
            <person name="Cannizzaro L.A."/>
            <person name="Boghosian-Sell L."/>
            <person name="Alder H."/>
            <person name="Baserga R."/>
        </authorList>
    </citation>
    <scope>NUCLEOTIDE SEQUENCE [MRNA]</scope>
    <scope>VARIANT VAL-211</scope>
    <scope>DEVELOPMENTAL STAGE</scope>
    <source>
        <tissue>Blood</tissue>
    </source>
</reference>
<reference key="2">
    <citation type="journal article" date="2000" name="Tissue Antigens">
        <title>Genetic polymorphisms in the cell growth regulated gene, SC1 telomeric of the HLA-C gene and lack of association of psoriasis vulgaris.</title>
        <authorList>
            <person name="Teraoka Y."/>
            <person name="Naruse T.K."/>
            <person name="Oka A."/>
            <person name="Matsuzawa Y."/>
            <person name="Shiina T."/>
            <person name="Iizuka M."/>
            <person name="Iwashita K."/>
            <person name="Ozawa A."/>
            <person name="Inoko H."/>
        </authorList>
    </citation>
    <scope>NUCLEOTIDE SEQUENCE [GENOMIC DNA]</scope>
    <scope>VARIANTS VAL-211 AND LEU-241</scope>
</reference>
<reference key="3">
    <citation type="submission" date="1995-05" db="EMBL/GenBank/DDBJ databases">
        <title>Molecular mapping by transposon-based nested deletion sequencing: the SC1 gene maps near the HLA-C locus.</title>
        <authorList>
            <person name="Krishnan R."/>
        </authorList>
    </citation>
    <scope>NUCLEOTIDE SEQUENCE [GENOMIC DNA]</scope>
    <scope>VARIANT VAL-211</scope>
    <source>
        <tissue>Blood</tissue>
    </source>
</reference>
<reference key="4">
    <citation type="submission" date="1999-09" db="EMBL/GenBank/DDBJ databases">
        <title>Homo sapiens 2,229,817bp genomic DNA of 6p21.3 HLA class I region.</title>
        <authorList>
            <person name="Shiina S."/>
            <person name="Tamiya G."/>
            <person name="Oka A."/>
            <person name="Inoko H."/>
        </authorList>
    </citation>
    <scope>NUCLEOTIDE SEQUENCE [LARGE SCALE GENOMIC DNA]</scope>
    <scope>VARIANT VAL-211</scope>
</reference>
<reference key="5">
    <citation type="journal article" date="2006" name="Genetics">
        <title>Rapid evolution of major histocompatibility complex class I genes in primates generates new disease alleles in humans via hitchhiking diversity.</title>
        <authorList>
            <person name="Shiina T."/>
            <person name="Ota M."/>
            <person name="Shimizu S."/>
            <person name="Katsuyama Y."/>
            <person name="Hashimoto N."/>
            <person name="Takasu M."/>
            <person name="Anzai T."/>
            <person name="Kulski J.K."/>
            <person name="Kikkawa E."/>
            <person name="Naruse T."/>
            <person name="Kimura N."/>
            <person name="Yanagiya K."/>
            <person name="Watanabe A."/>
            <person name="Hosomichi K."/>
            <person name="Kohara S."/>
            <person name="Iwamoto C."/>
            <person name="Umehara Y."/>
            <person name="Meyer A."/>
            <person name="Wanner V."/>
            <person name="Sano K."/>
            <person name="Macquin C."/>
            <person name="Ikeo K."/>
            <person name="Tokunaga K."/>
            <person name="Gojobori T."/>
            <person name="Inoko H."/>
            <person name="Bahram S."/>
        </authorList>
    </citation>
    <scope>NUCLEOTIDE SEQUENCE [LARGE SCALE GENOMIC DNA]</scope>
    <scope>VARIANT VAL-211</scope>
</reference>
<reference key="6">
    <citation type="submission" date="2003-05" db="EMBL/GenBank/DDBJ databases">
        <title>Cloning of human full-length CDSs in BD Creator(TM) system donor vector.</title>
        <authorList>
            <person name="Kalnine N."/>
            <person name="Chen X."/>
            <person name="Rolfs A."/>
            <person name="Halleck A."/>
            <person name="Hines L."/>
            <person name="Eisenstein S."/>
            <person name="Koundinya M."/>
            <person name="Raphael J."/>
            <person name="Moreira D."/>
            <person name="Kelley T."/>
            <person name="LaBaer J."/>
            <person name="Lin Y."/>
            <person name="Phelan M."/>
            <person name="Farmer A."/>
        </authorList>
    </citation>
    <scope>NUCLEOTIDE SEQUENCE [LARGE SCALE MRNA]</scope>
    <scope>VARIANTS VAL-211 AND LEU-241</scope>
</reference>
<reference key="7">
    <citation type="journal article" date="2003" name="Nature">
        <title>The DNA sequence and analysis of human chromosome 6.</title>
        <authorList>
            <person name="Mungall A.J."/>
            <person name="Palmer S.A."/>
            <person name="Sims S.K."/>
            <person name="Edwards C.A."/>
            <person name="Ashurst J.L."/>
            <person name="Wilming L."/>
            <person name="Jones M.C."/>
            <person name="Horton R."/>
            <person name="Hunt S.E."/>
            <person name="Scott C.E."/>
            <person name="Gilbert J.G.R."/>
            <person name="Clamp M.E."/>
            <person name="Bethel G."/>
            <person name="Milne S."/>
            <person name="Ainscough R."/>
            <person name="Almeida J.P."/>
            <person name="Ambrose K.D."/>
            <person name="Andrews T.D."/>
            <person name="Ashwell R.I.S."/>
            <person name="Babbage A.K."/>
            <person name="Bagguley C.L."/>
            <person name="Bailey J."/>
            <person name="Banerjee R."/>
            <person name="Barker D.J."/>
            <person name="Barlow K.F."/>
            <person name="Bates K."/>
            <person name="Beare D.M."/>
            <person name="Beasley H."/>
            <person name="Beasley O."/>
            <person name="Bird C.P."/>
            <person name="Blakey S.E."/>
            <person name="Bray-Allen S."/>
            <person name="Brook J."/>
            <person name="Brown A.J."/>
            <person name="Brown J.Y."/>
            <person name="Burford D.C."/>
            <person name="Burrill W."/>
            <person name="Burton J."/>
            <person name="Carder C."/>
            <person name="Carter N.P."/>
            <person name="Chapman J.C."/>
            <person name="Clark S.Y."/>
            <person name="Clark G."/>
            <person name="Clee C.M."/>
            <person name="Clegg S."/>
            <person name="Cobley V."/>
            <person name="Collier R.E."/>
            <person name="Collins J.E."/>
            <person name="Colman L.K."/>
            <person name="Corby N.R."/>
            <person name="Coville G.J."/>
            <person name="Culley K.M."/>
            <person name="Dhami P."/>
            <person name="Davies J."/>
            <person name="Dunn M."/>
            <person name="Earthrowl M.E."/>
            <person name="Ellington A.E."/>
            <person name="Evans K.A."/>
            <person name="Faulkner L."/>
            <person name="Francis M.D."/>
            <person name="Frankish A."/>
            <person name="Frankland J."/>
            <person name="French L."/>
            <person name="Garner P."/>
            <person name="Garnett J."/>
            <person name="Ghori M.J."/>
            <person name="Gilby L.M."/>
            <person name="Gillson C.J."/>
            <person name="Glithero R.J."/>
            <person name="Grafham D.V."/>
            <person name="Grant M."/>
            <person name="Gribble S."/>
            <person name="Griffiths C."/>
            <person name="Griffiths M.N.D."/>
            <person name="Hall R."/>
            <person name="Halls K.S."/>
            <person name="Hammond S."/>
            <person name="Harley J.L."/>
            <person name="Hart E.A."/>
            <person name="Heath P.D."/>
            <person name="Heathcott R."/>
            <person name="Holmes S.J."/>
            <person name="Howden P.J."/>
            <person name="Howe K.L."/>
            <person name="Howell G.R."/>
            <person name="Huckle E."/>
            <person name="Humphray S.J."/>
            <person name="Humphries M.D."/>
            <person name="Hunt A.R."/>
            <person name="Johnson C.M."/>
            <person name="Joy A.A."/>
            <person name="Kay M."/>
            <person name="Keenan S.J."/>
            <person name="Kimberley A.M."/>
            <person name="King A."/>
            <person name="Laird G.K."/>
            <person name="Langford C."/>
            <person name="Lawlor S."/>
            <person name="Leongamornlert D.A."/>
            <person name="Leversha M."/>
            <person name="Lloyd C.R."/>
            <person name="Lloyd D.M."/>
            <person name="Loveland J.E."/>
            <person name="Lovell J."/>
            <person name="Martin S."/>
            <person name="Mashreghi-Mohammadi M."/>
            <person name="Maslen G.L."/>
            <person name="Matthews L."/>
            <person name="McCann O.T."/>
            <person name="McLaren S.J."/>
            <person name="McLay K."/>
            <person name="McMurray A."/>
            <person name="Moore M.J.F."/>
            <person name="Mullikin J.C."/>
            <person name="Niblett D."/>
            <person name="Nickerson T."/>
            <person name="Novik K.L."/>
            <person name="Oliver K."/>
            <person name="Overton-Larty E.K."/>
            <person name="Parker A."/>
            <person name="Patel R."/>
            <person name="Pearce A.V."/>
            <person name="Peck A.I."/>
            <person name="Phillimore B.J.C.T."/>
            <person name="Phillips S."/>
            <person name="Plumb R.W."/>
            <person name="Porter K.M."/>
            <person name="Ramsey Y."/>
            <person name="Ranby S.A."/>
            <person name="Rice C.M."/>
            <person name="Ross M.T."/>
            <person name="Searle S.M."/>
            <person name="Sehra H.K."/>
            <person name="Sheridan E."/>
            <person name="Skuce C.D."/>
            <person name="Smith S."/>
            <person name="Smith M."/>
            <person name="Spraggon L."/>
            <person name="Squares S.L."/>
            <person name="Steward C.A."/>
            <person name="Sycamore N."/>
            <person name="Tamlyn-Hall G."/>
            <person name="Tester J."/>
            <person name="Theaker A.J."/>
            <person name="Thomas D.W."/>
            <person name="Thorpe A."/>
            <person name="Tracey A."/>
            <person name="Tromans A."/>
            <person name="Tubby B."/>
            <person name="Wall M."/>
            <person name="Wallis J.M."/>
            <person name="West A.P."/>
            <person name="White S.S."/>
            <person name="Whitehead S.L."/>
            <person name="Whittaker H."/>
            <person name="Wild A."/>
            <person name="Willey D.J."/>
            <person name="Wilmer T.E."/>
            <person name="Wood J.M."/>
            <person name="Wray P.W."/>
            <person name="Wyatt J.C."/>
            <person name="Young L."/>
            <person name="Younger R.M."/>
            <person name="Bentley D.R."/>
            <person name="Coulson A."/>
            <person name="Durbin R.M."/>
            <person name="Hubbard T."/>
            <person name="Sulston J.E."/>
            <person name="Dunham I."/>
            <person name="Rogers J."/>
            <person name="Beck S."/>
        </authorList>
    </citation>
    <scope>NUCLEOTIDE SEQUENCE [LARGE SCALE GENOMIC DNA]</scope>
    <scope>VARIANTS SER-109 AND VAL-211</scope>
</reference>
<reference key="8">
    <citation type="submission" date="2005-07" db="EMBL/GenBank/DDBJ databases">
        <authorList>
            <person name="Mural R.J."/>
            <person name="Istrail S."/>
            <person name="Sutton G.G."/>
            <person name="Florea L."/>
            <person name="Halpern A.L."/>
            <person name="Mobarry C.M."/>
            <person name="Lippert R."/>
            <person name="Walenz B."/>
            <person name="Shatkay H."/>
            <person name="Dew I."/>
            <person name="Miller J.R."/>
            <person name="Flanigan M.J."/>
            <person name="Edwards N.J."/>
            <person name="Bolanos R."/>
            <person name="Fasulo D."/>
            <person name="Halldorsson B.V."/>
            <person name="Hannenhalli S."/>
            <person name="Turner R."/>
            <person name="Yooseph S."/>
            <person name="Lu F."/>
            <person name="Nusskern D.R."/>
            <person name="Shue B.C."/>
            <person name="Zheng X.H."/>
            <person name="Zhong F."/>
            <person name="Delcher A.L."/>
            <person name="Huson D.H."/>
            <person name="Kravitz S.A."/>
            <person name="Mouchard L."/>
            <person name="Reinert K."/>
            <person name="Remington K.A."/>
            <person name="Clark A.G."/>
            <person name="Waterman M.S."/>
            <person name="Eichler E.E."/>
            <person name="Adams M.D."/>
            <person name="Hunkapiller M.W."/>
            <person name="Myers E.W."/>
            <person name="Venter J.C."/>
        </authorList>
    </citation>
    <scope>NUCLEOTIDE SEQUENCE [LARGE SCALE GENOMIC DNA]</scope>
</reference>
<reference key="9">
    <citation type="journal article" date="2004" name="Genome Res.">
        <title>The status, quality, and expansion of the NIH full-length cDNA project: the Mammalian Gene Collection (MGC).</title>
        <authorList>
            <consortium name="The MGC Project Team"/>
        </authorList>
    </citation>
    <scope>NUCLEOTIDE SEQUENCE [LARGE SCALE MRNA]</scope>
    <scope>VARIANTS VAL-211 AND LEU-241</scope>
    <source>
        <tissue>Brain</tissue>
        <tissue>Colon</tissue>
        <tissue>Skin</tissue>
    </source>
</reference>
<reference key="10">
    <citation type="journal article" date="2007" name="Science">
        <title>ATM and ATR substrate analysis reveals extensive protein networks responsive to DNA damage.</title>
        <authorList>
            <person name="Matsuoka S."/>
            <person name="Ballif B.A."/>
            <person name="Smogorzewska A."/>
            <person name="McDonald E.R. III"/>
            <person name="Hurov K.E."/>
            <person name="Luo J."/>
            <person name="Bakalarski C.E."/>
            <person name="Zhao Z."/>
            <person name="Solimini N."/>
            <person name="Lerenthal Y."/>
            <person name="Shiloh Y."/>
            <person name="Gygi S.P."/>
            <person name="Elledge S.J."/>
        </authorList>
    </citation>
    <scope>PHOSPHORYLATION [LARGE SCALE ANALYSIS] AT SER-78</scope>
    <scope>IDENTIFICATION BY MASS SPECTROMETRY [LARGE SCALE ANALYSIS]</scope>
    <source>
        <tissue>Embryonic kidney</tissue>
    </source>
</reference>
<reference key="11">
    <citation type="journal article" date="2019" name="Cell Biol. Int.">
        <title>TCF19 contributes to cell proliferation of non-small cell lung cancer by inhibiting FOXO1.</title>
        <authorList>
            <person name="Zhou Z.H."/>
            <person name="Chen G."/>
            <person name="Deng C."/>
            <person name="Tang J.M."/>
            <person name="Xie L."/>
            <person name="Zhou H.Y."/>
            <person name="Ye X."/>
            <person name="Zhang D.K."/>
            <person name="Shi R.Q."/>
            <person name="Tian D."/>
            <person name="Qiao G.B."/>
            <person name="Ben X.S."/>
        </authorList>
    </citation>
    <scope>FUNCTION</scope>
</reference>